<reference key="1">
    <citation type="journal article" date="2011" name="J. Bacteriol.">
        <title>Comparative genomics of 28 Salmonella enterica isolates: evidence for CRISPR-mediated adaptive sublineage evolution.</title>
        <authorList>
            <person name="Fricke W.F."/>
            <person name="Mammel M.K."/>
            <person name="McDermott P.F."/>
            <person name="Tartera C."/>
            <person name="White D.G."/>
            <person name="Leclerc J.E."/>
            <person name="Ravel J."/>
            <person name="Cebula T.A."/>
        </authorList>
    </citation>
    <scope>NUCLEOTIDE SEQUENCE [LARGE SCALE GENOMIC DNA]</scope>
    <source>
        <strain>SL476</strain>
    </source>
</reference>
<gene>
    <name evidence="1" type="primary">mukF</name>
    <name type="ordered locus">SeHA_C1090</name>
</gene>
<name>MUKF_SALHS</name>
<proteinExistence type="inferred from homology"/>
<keyword id="KW-0106">Calcium</keyword>
<keyword id="KW-0131">Cell cycle</keyword>
<keyword id="KW-0132">Cell division</keyword>
<keyword id="KW-0159">Chromosome partition</keyword>
<keyword id="KW-0963">Cytoplasm</keyword>
<keyword id="KW-0226">DNA condensation</keyword>
<evidence type="ECO:0000255" key="1">
    <source>
        <dbReference type="HAMAP-Rule" id="MF_01803"/>
    </source>
</evidence>
<organism>
    <name type="scientific">Salmonella heidelberg (strain SL476)</name>
    <dbReference type="NCBI Taxonomy" id="454169"/>
    <lineage>
        <taxon>Bacteria</taxon>
        <taxon>Pseudomonadati</taxon>
        <taxon>Pseudomonadota</taxon>
        <taxon>Gammaproteobacteria</taxon>
        <taxon>Enterobacterales</taxon>
        <taxon>Enterobacteriaceae</taxon>
        <taxon>Salmonella</taxon>
    </lineage>
</organism>
<dbReference type="EMBL" id="CP001120">
    <property type="protein sequence ID" value="ACF67816.1"/>
    <property type="molecule type" value="Genomic_DNA"/>
</dbReference>
<dbReference type="RefSeq" id="WP_001288828.1">
    <property type="nucleotide sequence ID" value="NC_011083.1"/>
</dbReference>
<dbReference type="SMR" id="B4TDQ9"/>
<dbReference type="KEGG" id="seh:SeHA_C1090"/>
<dbReference type="HOGENOM" id="CLU_049853_0_0_6"/>
<dbReference type="Proteomes" id="UP000001866">
    <property type="component" value="Chromosome"/>
</dbReference>
<dbReference type="GO" id="GO:0005737">
    <property type="term" value="C:cytoplasm"/>
    <property type="evidence" value="ECO:0007669"/>
    <property type="project" value="UniProtKB-UniRule"/>
</dbReference>
<dbReference type="GO" id="GO:0009295">
    <property type="term" value="C:nucleoid"/>
    <property type="evidence" value="ECO:0007669"/>
    <property type="project" value="UniProtKB-SubCell"/>
</dbReference>
<dbReference type="GO" id="GO:0005509">
    <property type="term" value="F:calcium ion binding"/>
    <property type="evidence" value="ECO:0007669"/>
    <property type="project" value="UniProtKB-UniRule"/>
</dbReference>
<dbReference type="GO" id="GO:0051301">
    <property type="term" value="P:cell division"/>
    <property type="evidence" value="ECO:0007669"/>
    <property type="project" value="UniProtKB-KW"/>
</dbReference>
<dbReference type="GO" id="GO:0030261">
    <property type="term" value="P:chromosome condensation"/>
    <property type="evidence" value="ECO:0007669"/>
    <property type="project" value="UniProtKB-KW"/>
</dbReference>
<dbReference type="GO" id="GO:0007059">
    <property type="term" value="P:chromosome segregation"/>
    <property type="evidence" value="ECO:0007669"/>
    <property type="project" value="UniProtKB-UniRule"/>
</dbReference>
<dbReference type="GO" id="GO:0006260">
    <property type="term" value="P:DNA replication"/>
    <property type="evidence" value="ECO:0007669"/>
    <property type="project" value="UniProtKB-UniRule"/>
</dbReference>
<dbReference type="CDD" id="cd16337">
    <property type="entry name" value="MukF_C"/>
    <property type="match status" value="1"/>
</dbReference>
<dbReference type="CDD" id="cd16335">
    <property type="entry name" value="MukF_N"/>
    <property type="match status" value="1"/>
</dbReference>
<dbReference type="Gene3D" id="1.20.58.590">
    <property type="entry name" value="Chromosome partition protein MukF, middle domain"/>
    <property type="match status" value="1"/>
</dbReference>
<dbReference type="Gene3D" id="1.10.225.40">
    <property type="entry name" value="MukF, C-terminal domain"/>
    <property type="match status" value="1"/>
</dbReference>
<dbReference type="Gene3D" id="1.10.10.10">
    <property type="entry name" value="Winged helix-like DNA-binding domain superfamily/Winged helix DNA-binding domain"/>
    <property type="match status" value="1"/>
</dbReference>
<dbReference type="HAMAP" id="MF_01803">
    <property type="entry name" value="MukF"/>
    <property type="match status" value="1"/>
</dbReference>
<dbReference type="InterPro" id="IPR005582">
    <property type="entry name" value="Chromosome_partition_MukF"/>
</dbReference>
<dbReference type="InterPro" id="IPR033441">
    <property type="entry name" value="MukF_C"/>
</dbReference>
<dbReference type="InterPro" id="IPR038198">
    <property type="entry name" value="MukF_C_sf"/>
</dbReference>
<dbReference type="InterPro" id="IPR033440">
    <property type="entry name" value="MukF_M"/>
</dbReference>
<dbReference type="InterPro" id="IPR036141">
    <property type="entry name" value="MukF_M_sp"/>
</dbReference>
<dbReference type="InterPro" id="IPR033439">
    <property type="entry name" value="MukF_WHTH"/>
</dbReference>
<dbReference type="InterPro" id="IPR036388">
    <property type="entry name" value="WH-like_DNA-bd_sf"/>
</dbReference>
<dbReference type="InterPro" id="IPR036390">
    <property type="entry name" value="WH_DNA-bd_sf"/>
</dbReference>
<dbReference type="NCBIfam" id="NF003615">
    <property type="entry name" value="PRK05260.1"/>
    <property type="match status" value="1"/>
</dbReference>
<dbReference type="Pfam" id="PF03882">
    <property type="entry name" value="KicB"/>
    <property type="match status" value="1"/>
</dbReference>
<dbReference type="Pfam" id="PF17193">
    <property type="entry name" value="MukF_C"/>
    <property type="match status" value="1"/>
</dbReference>
<dbReference type="Pfam" id="PF17192">
    <property type="entry name" value="MukF_M"/>
    <property type="match status" value="1"/>
</dbReference>
<dbReference type="PIRSF" id="PIRSF018282">
    <property type="entry name" value="MukF"/>
    <property type="match status" value="1"/>
</dbReference>
<dbReference type="SUPFAM" id="SSF140570">
    <property type="entry name" value="MukF C-terminal domain-like"/>
    <property type="match status" value="1"/>
</dbReference>
<dbReference type="SUPFAM" id="SSF46785">
    <property type="entry name" value="Winged helix' DNA-binding domain"/>
    <property type="match status" value="1"/>
</dbReference>
<comment type="function">
    <text evidence="1">Involved in chromosome condensation, segregation and cell cycle progression. May participate in facilitating chromosome segregation by condensation DNA from both sides of a centrally located replisome during cell division. Not required for mini-F plasmid partitioning. Probably acts via its interaction with MukB and MukE. Overexpression results in anucleate cells. It has a calcium binding activity.</text>
</comment>
<comment type="subunit">
    <text evidence="1">Interacts, and probably forms a ternary complex, with MukE and MukB via its C-terminal region. The complex formation is stimulated by calcium or magnesium. It is required for an interaction between MukE and MukB.</text>
</comment>
<comment type="subcellular location">
    <subcellularLocation>
        <location evidence="1">Cytoplasm</location>
        <location evidence="1">Nucleoid</location>
    </subcellularLocation>
    <text evidence="1">Restricted to the nucleoid region.</text>
</comment>
<comment type="similarity">
    <text evidence="1">Belongs to the MukF family.</text>
</comment>
<protein>
    <recommendedName>
        <fullName evidence="1">Chromosome partition protein MukF</fullName>
    </recommendedName>
</protein>
<feature type="chain" id="PRO_1000187516" description="Chromosome partition protein MukF">
    <location>
        <begin position="1"/>
        <end position="440"/>
    </location>
</feature>
<feature type="region of interest" description="Leucine-zipper">
    <location>
        <begin position="208"/>
        <end position="236"/>
    </location>
</feature>
<sequence length="440" mass="50461">MSEFSQTVPELVAWARKNDFSISLPVDRLSFLLAVATLNGERLDGEMSEGELVDAFRHVSDAFEQTSETIGVRANNAINDMVRQRLLNRFTSEQAEGNAIYRLTPLGIGITDYYIRQREFSTLRLSMQLSIVAGELKRAADAAAEGGDEFHWHRNVYAPLKYSVAEIFDSIDLTQRIMDEQQQQVKDDIAQLLNKDWRAAISSCELLLSETSGTLRELQDTLEAAGDKLQANLLRIQDATMTHDDLHFVDRLVFDLQSKLDRIISWGQQSIDLWIGYDRHVHKFIRTAIDMDKNRVFAQRLRQSVQTYFDDPWALTYANADRLLDMRDEEMALRDDEVTGELPPDLEYEEFNEIREQLAAIIEEQLAIYKTRQTPLDLGLVVREYLAQYPRARHFDVARIVIDQAVRLGVAQADFTGLPAKWQPINDYGAKVQAHVIDKY</sequence>
<accession>B4TDQ9</accession>